<dbReference type="EMBL" id="AP000342">
    <property type="protein sequence ID" value="BAA78791.1"/>
    <property type="molecule type" value="Genomic_DNA"/>
</dbReference>
<dbReference type="RefSeq" id="NP_052887.1">
    <property type="nucleotide sequence ID" value="NC_002134.1"/>
</dbReference>
<dbReference type="RefSeq" id="WP_000993386.1">
    <property type="nucleotide sequence ID" value="NZ_WPET01000167.1"/>
</dbReference>
<dbReference type="GeneID" id="93248037"/>
<dbReference type="GO" id="GO:0005886">
    <property type="term" value="C:plasma membrane"/>
    <property type="evidence" value="ECO:0007669"/>
    <property type="project" value="UniProtKB-SubCell"/>
</dbReference>
<dbReference type="GO" id="GO:0015097">
    <property type="term" value="F:mercury ion transmembrane transporter activity"/>
    <property type="evidence" value="ECO:0007669"/>
    <property type="project" value="InterPro"/>
</dbReference>
<dbReference type="InterPro" id="IPR007746">
    <property type="entry name" value="MerE"/>
</dbReference>
<dbReference type="NCBIfam" id="NF010310">
    <property type="entry name" value="PRK13747.1"/>
    <property type="match status" value="1"/>
</dbReference>
<dbReference type="Pfam" id="PF05052">
    <property type="entry name" value="MerE"/>
    <property type="match status" value="1"/>
</dbReference>
<evidence type="ECO:0000255" key="1"/>
<evidence type="ECO:0000269" key="2">
    <source>
    </source>
</evidence>
<evidence type="ECO:0000303" key="3">
    <source>
    </source>
</evidence>
<evidence type="ECO:0000305" key="4"/>
<evidence type="ECO:0000312" key="5">
    <source>
        <dbReference type="EMBL" id="BAA78791.1"/>
    </source>
</evidence>
<organism>
    <name type="scientific">Shigella flexneri</name>
    <dbReference type="NCBI Taxonomy" id="623"/>
    <lineage>
        <taxon>Bacteria</taxon>
        <taxon>Pseudomonadati</taxon>
        <taxon>Pseudomonadota</taxon>
        <taxon>Gammaproteobacteria</taxon>
        <taxon>Enterobacterales</taxon>
        <taxon>Enterobacteriaceae</taxon>
        <taxon>Shigella</taxon>
    </lineage>
</organism>
<reference key="1">
    <citation type="submission" date="1999-05" db="EMBL/GenBank/DDBJ databases">
        <title>Organization and diversification of plasmid genomes: complete nucleotide sequence of the R100 genome.</title>
        <authorList>
            <person name="Sampei G."/>
            <person name="Mizobuchi K."/>
        </authorList>
    </citation>
    <scope>NUCLEOTIDE SEQUENCE [GENOMIC DNA]</scope>
    <source>
        <strain>222 / Serotype 2b</strain>
    </source>
</reference>
<reference key="2">
    <citation type="journal article" date="2009" name="FEBS Lett.">
        <title>The MerE protein encoded by transposon Tn21 is a broad mercury transporter in Escherichia coli.</title>
        <authorList>
            <person name="Kiyono M."/>
            <person name="Sone Y."/>
            <person name="Nakamura R."/>
            <person name="Pan-Hou H."/>
            <person name="Sakabe K."/>
        </authorList>
    </citation>
    <scope>FUNCTION</scope>
    <scope>SUBCELLULAR LOCATION</scope>
</reference>
<feature type="chain" id="PRO_0000442700" description="Broad mercury transporter MerE">
    <location>
        <begin position="1"/>
        <end position="78"/>
    </location>
</feature>
<feature type="transmembrane region" description="Helical" evidence="1">
    <location>
        <begin position="19"/>
        <end position="39"/>
    </location>
</feature>
<feature type="transmembrane region" description="Helical" evidence="1">
    <location>
        <begin position="47"/>
        <end position="67"/>
    </location>
</feature>
<keyword id="KW-0997">Cell inner membrane</keyword>
<keyword id="KW-1003">Cell membrane</keyword>
<keyword id="KW-0472">Membrane</keyword>
<keyword id="KW-0475">Mercuric resistance</keyword>
<keyword id="KW-0614">Plasmid</keyword>
<keyword id="KW-0812">Transmembrane</keyword>
<keyword id="KW-1133">Transmembrane helix</keyword>
<keyword id="KW-0813">Transport</keyword>
<protein>
    <recommendedName>
        <fullName evidence="4">Broad mercury transporter MerE</fullName>
    </recommendedName>
</protein>
<accession>Q7AKA4</accession>
<gene>
    <name evidence="3" type="primary">merE</name>
    <name evidence="5" type="synonym">yadA</name>
</gene>
<name>MERE_SHIFL</name>
<geneLocation type="plasmid">
    <name>IncFII R100</name>
    <name>NR1</name>
</geneLocation>
<comment type="function">
    <text evidence="2">Broad mercury transporter that mediates the transport of both CH(3)Hg(I) and Hg(II) across the membrane.</text>
</comment>
<comment type="subcellular location">
    <subcellularLocation>
        <location evidence="2">Cell inner membrane</location>
        <topology evidence="1">Multi-pass membrane protein</topology>
    </subcellularLocation>
</comment>
<proteinExistence type="inferred from homology"/>
<sequence>MNAPDKLPPETRQPVSGYLWGALAVLTCPCHLPILAAVLAGTTAGAFLGEHWGVAALALTGLFVLAVTRLLRAFRGGS</sequence>